<reference key="1">
    <citation type="submission" date="2002-04" db="EMBL/GenBank/DDBJ databases">
        <title>Isolation and characterization of cDNA for macaque neurological disease genes.</title>
        <authorList>
            <person name="Kusuda J."/>
            <person name="Osada N."/>
            <person name="Hida M."/>
            <person name="Sugano S."/>
            <person name="Hashimoto K."/>
        </authorList>
    </citation>
    <scope>NUCLEOTIDE SEQUENCE [LARGE SCALE MRNA]</scope>
    <source>
        <tissue>Brain cortex</tissue>
    </source>
</reference>
<comment type="function">
    <text evidence="2">Together with BCKDHB forms the heterotetrameric E1 subunit of the mitochondrial branched-chain alpha-ketoacid dehydrogenase (BCKD) complex. The BCKD complex catalyzes the multi-step oxidative decarboxylation of alpha-ketoacids derived from the branched-chain amino-acids valine, leucine and isoleucine producing CO2 and acyl-CoA which is subsequently utilized to produce energy. The E1 subunit catalyzes the first step with the decarboxylation of the alpha-ketoacid forming an enzyme-product intermediate. A reductive acylation mediated by the lipoylamide cofactor of E2 extracts the acyl group from the E1 active site for the next step of the reaction.</text>
</comment>
<comment type="catalytic activity">
    <reaction evidence="2">
        <text>N(6)-[(R)-lipoyl]-L-lysyl-[protein] + 3-methyl-2-oxobutanoate + H(+) = N(6)-[(R)-S(8)-2-methylpropanoyldihydrolipoyl]-L-lysyl-[protein] + CO2</text>
        <dbReference type="Rhea" id="RHEA:13457"/>
        <dbReference type="Rhea" id="RHEA-COMP:10474"/>
        <dbReference type="Rhea" id="RHEA-COMP:10497"/>
        <dbReference type="ChEBI" id="CHEBI:11851"/>
        <dbReference type="ChEBI" id="CHEBI:15378"/>
        <dbReference type="ChEBI" id="CHEBI:16526"/>
        <dbReference type="ChEBI" id="CHEBI:83099"/>
        <dbReference type="ChEBI" id="CHEBI:83142"/>
        <dbReference type="EC" id="1.2.4.4"/>
    </reaction>
    <physiologicalReaction direction="left-to-right" evidence="2">
        <dbReference type="Rhea" id="RHEA:13458"/>
    </physiologicalReaction>
</comment>
<comment type="cofactor">
    <cofactor evidence="2">
        <name>thiamine diphosphate</name>
        <dbReference type="ChEBI" id="CHEBI:58937"/>
    </cofactor>
    <cofactor evidence="2">
        <name>Mg(2+)</name>
        <dbReference type="ChEBI" id="CHEBI:18420"/>
    </cofactor>
</comment>
<comment type="subunit">
    <text evidence="2">Heterotetramer of 2 alpha/BCKDHA and 2 beta chains/BCKDHB that forms the branched-chain alpha-keto acid decarboxylase (E1) component of the BCKD complex. The branched-chain alpha-ketoacid dehydrogenase is a large complex composed of three major building blocks E1, E2 and E3. It is organized around E2, a 24-meric cubic core composed of DBT, to which are associated 6 to 12 copies of E1, and approximately 6 copies of the dehydrogenase E3, a DLD dimer. Interacts with PPM1K.</text>
</comment>
<comment type="subcellular location">
    <subcellularLocation>
        <location evidence="2">Mitochondrion matrix</location>
    </subcellularLocation>
</comment>
<comment type="PTM">
    <text evidence="2">Phosphorylated at Ser-337 by BCKDK and dephosphorylated by protein phosphatase PPM1K.</text>
</comment>
<comment type="similarity">
    <text evidence="4">Belongs to the BCKDHA family.</text>
</comment>
<accession>Q8HXY4</accession>
<name>ODBA_MACFA</name>
<sequence>MAVAIAAARVWRPNRGLSQAALLLLWRPGARGLARSHPHRQQQQFSSLDDKPQFPGASAEFIDKLEFIQPNVISGIPIYRVMDRQGQIINPSEDPHLPKEKVLKLYKSMTLLNTMDRILYESQRQGRISFYMTNYGEEGTHVGSAAALDNTDLVFGQYREAGVLMYRDYPLELFMAQCYGNISDLGKGRQMPVHYGCKERHFVTISSPLATQIPQAVGAAYAAKRANANRVVICYFGEGAASEGDAHAGFNFAATLECPIIFFCRNNGYAISTPTSEQYRGDGIAARGPGYGIMSIRVDGNDVFAVYNATKEARRRAVAENQPFLIEAMTYRIGHHSTSDDSSAYRSVDEVNYWDKQDHPISRLRHYLLSQGWWDEEQEKAWRKQSRKKVMKAFEQAERKPKPNPNLLFSDVYQEMPAQLRKQQESLARHLQTYGEHYPLEHFDK</sequence>
<evidence type="ECO:0000250" key="1"/>
<evidence type="ECO:0000250" key="2">
    <source>
        <dbReference type="UniProtKB" id="P12694"/>
    </source>
</evidence>
<evidence type="ECO:0000250" key="3">
    <source>
        <dbReference type="UniProtKB" id="P50136"/>
    </source>
</evidence>
<evidence type="ECO:0000305" key="4"/>
<keyword id="KW-0007">Acetylation</keyword>
<keyword id="KW-0460">Magnesium</keyword>
<keyword id="KW-0479">Metal-binding</keyword>
<keyword id="KW-0496">Mitochondrion</keyword>
<keyword id="KW-0560">Oxidoreductase</keyword>
<keyword id="KW-0597">Phosphoprotein</keyword>
<keyword id="KW-0630">Potassium</keyword>
<keyword id="KW-1185">Reference proteome</keyword>
<keyword id="KW-0786">Thiamine pyrophosphate</keyword>
<keyword id="KW-0809">Transit peptide</keyword>
<protein>
    <recommendedName>
        <fullName evidence="2">2-oxoisovalerate dehydrogenase subunit alpha, mitochondrial</fullName>
        <ecNumber evidence="2">1.2.4.4</ecNumber>
    </recommendedName>
    <alternativeName>
        <fullName>Branched-chain alpha-keto acid dehydrogenase E1 component alpha chain</fullName>
        <shortName>BCKDE1A</shortName>
        <shortName>BCKDH E1-alpha</shortName>
    </alternativeName>
</protein>
<gene>
    <name type="primary">BCKDHA</name>
    <name type="ORF">QccE-11424</name>
</gene>
<organism>
    <name type="scientific">Macaca fascicularis</name>
    <name type="common">Crab-eating macaque</name>
    <name type="synonym">Cynomolgus monkey</name>
    <dbReference type="NCBI Taxonomy" id="9541"/>
    <lineage>
        <taxon>Eukaryota</taxon>
        <taxon>Metazoa</taxon>
        <taxon>Chordata</taxon>
        <taxon>Craniata</taxon>
        <taxon>Vertebrata</taxon>
        <taxon>Euteleostomi</taxon>
        <taxon>Mammalia</taxon>
        <taxon>Eutheria</taxon>
        <taxon>Euarchontoglires</taxon>
        <taxon>Primates</taxon>
        <taxon>Haplorrhini</taxon>
        <taxon>Catarrhini</taxon>
        <taxon>Cercopithecidae</taxon>
        <taxon>Cercopithecinae</taxon>
        <taxon>Macaca</taxon>
    </lineage>
</organism>
<feature type="transit peptide" description="Mitochondrion" evidence="1">
    <location>
        <begin position="1"/>
        <end position="45"/>
    </location>
</feature>
<feature type="chain" id="PRO_0000020466" description="2-oxoisovalerate dehydrogenase subunit alpha, mitochondrial">
    <location>
        <begin position="46"/>
        <end position="445"/>
    </location>
</feature>
<feature type="binding site" evidence="2">
    <location>
        <position position="158"/>
    </location>
    <ligand>
        <name>thiamine diphosphate</name>
        <dbReference type="ChEBI" id="CHEBI:58937"/>
        <note>ligand shared with beta subunit</note>
    </ligand>
</feature>
<feature type="binding site" evidence="2">
    <location>
        <position position="159"/>
    </location>
    <ligand>
        <name>thiamine diphosphate</name>
        <dbReference type="ChEBI" id="CHEBI:58937"/>
        <note>ligand shared with beta subunit</note>
    </ligand>
</feature>
<feature type="binding site" evidence="2">
    <location>
        <position position="206"/>
    </location>
    <ligand>
        <name>K(+)</name>
        <dbReference type="ChEBI" id="CHEBI:29103"/>
        <note>structural</note>
    </ligand>
</feature>
<feature type="binding site" evidence="2">
    <location>
        <position position="207"/>
    </location>
    <ligand>
        <name>thiamine diphosphate</name>
        <dbReference type="ChEBI" id="CHEBI:58937"/>
        <note>ligand shared with beta subunit</note>
    </ligand>
</feature>
<feature type="binding site" evidence="2">
    <location>
        <position position="208"/>
    </location>
    <ligand>
        <name>K(+)</name>
        <dbReference type="ChEBI" id="CHEBI:29103"/>
        <note>structural</note>
    </ligand>
</feature>
<feature type="binding site" evidence="2">
    <location>
        <position position="211"/>
    </location>
    <ligand>
        <name>K(+)</name>
        <dbReference type="ChEBI" id="CHEBI:29103"/>
        <note>structural</note>
    </ligand>
</feature>
<feature type="binding site" evidence="2">
    <location>
        <position position="212"/>
    </location>
    <ligand>
        <name>K(+)</name>
        <dbReference type="ChEBI" id="CHEBI:29103"/>
        <note>structural</note>
    </ligand>
</feature>
<feature type="binding site" evidence="2">
    <location>
        <position position="238"/>
    </location>
    <ligand>
        <name>Mg(2+)</name>
        <dbReference type="ChEBI" id="CHEBI:18420"/>
    </ligand>
</feature>
<feature type="binding site" evidence="2">
    <location>
        <position position="239"/>
    </location>
    <ligand>
        <name>thiamine diphosphate</name>
        <dbReference type="ChEBI" id="CHEBI:58937"/>
        <note>ligand shared with beta subunit</note>
    </ligand>
</feature>
<feature type="binding site" evidence="2">
    <location>
        <position position="240"/>
    </location>
    <ligand>
        <name>thiamine diphosphate</name>
        <dbReference type="ChEBI" id="CHEBI:58937"/>
        <note>ligand shared with beta subunit</note>
    </ligand>
</feature>
<feature type="binding site" evidence="2">
    <location>
        <position position="265"/>
    </location>
    <ligand>
        <name>thiamine diphosphate</name>
        <dbReference type="ChEBI" id="CHEBI:58937"/>
        <note>ligand shared with beta subunit</note>
    </ligand>
</feature>
<feature type="binding site" evidence="2">
    <location>
        <position position="267"/>
    </location>
    <ligand>
        <name>Mg(2+)</name>
        <dbReference type="ChEBI" id="CHEBI:18420"/>
    </ligand>
</feature>
<feature type="binding site" evidence="2">
    <location>
        <position position="269"/>
    </location>
    <ligand>
        <name>Mg(2+)</name>
        <dbReference type="ChEBI" id="CHEBI:18420"/>
    </ligand>
</feature>
<feature type="binding site" evidence="2">
    <location>
        <position position="336"/>
    </location>
    <ligand>
        <name>thiamine diphosphate</name>
        <dbReference type="ChEBI" id="CHEBI:58937"/>
        <note>ligand shared with beta subunit</note>
    </ligand>
</feature>
<feature type="modified residue" description="Phosphoserine; by BCKDK" evidence="2">
    <location>
        <position position="337"/>
    </location>
</feature>
<feature type="modified residue" description="Phosphothreonine" evidence="3">
    <location>
        <position position="338"/>
    </location>
</feature>
<feature type="modified residue" description="Phosphoserine" evidence="3">
    <location>
        <position position="339"/>
    </location>
</feature>
<feature type="modified residue" description="Phosphoserine" evidence="3">
    <location>
        <position position="347"/>
    </location>
</feature>
<feature type="modified residue" description="N6-acetyllysine; alternate" evidence="3">
    <location>
        <position position="356"/>
    </location>
</feature>
<feature type="modified residue" description="N6-succinyllysine; alternate" evidence="3">
    <location>
        <position position="356"/>
    </location>
</feature>
<feature type="modified residue" description="N6-succinyllysine" evidence="3">
    <location>
        <position position="380"/>
    </location>
</feature>
<proteinExistence type="evidence at transcript level"/>
<dbReference type="EC" id="1.2.4.4" evidence="2"/>
<dbReference type="EMBL" id="AB083305">
    <property type="protein sequence ID" value="BAC20584.1"/>
    <property type="molecule type" value="mRNA"/>
</dbReference>
<dbReference type="RefSeq" id="NP_001271018.1">
    <property type="nucleotide sequence ID" value="NM_001284089.1"/>
</dbReference>
<dbReference type="SMR" id="Q8HXY4"/>
<dbReference type="STRING" id="9541.ENSMFAP00000041548"/>
<dbReference type="GeneID" id="102134149"/>
<dbReference type="KEGG" id="mcf:102134149"/>
<dbReference type="CTD" id="593"/>
<dbReference type="eggNOG" id="KOG1182">
    <property type="taxonomic scope" value="Eukaryota"/>
</dbReference>
<dbReference type="OrthoDB" id="3845at2759"/>
<dbReference type="Proteomes" id="UP000233100">
    <property type="component" value="Unplaced"/>
</dbReference>
<dbReference type="GO" id="GO:0160157">
    <property type="term" value="C:branched-chain alpha-ketoacid dehydrogenase complex"/>
    <property type="evidence" value="ECO:0000250"/>
    <property type="project" value="UniProtKB"/>
</dbReference>
<dbReference type="GO" id="GO:0005759">
    <property type="term" value="C:mitochondrial matrix"/>
    <property type="evidence" value="ECO:0007669"/>
    <property type="project" value="UniProtKB-SubCell"/>
</dbReference>
<dbReference type="GO" id="GO:0003863">
    <property type="term" value="F:3-methyl-2-oxobutanoate dehydrogenase (2-methylpropanoyl-transferring) activity"/>
    <property type="evidence" value="ECO:0007669"/>
    <property type="project" value="UniProtKB-EC"/>
</dbReference>
<dbReference type="GO" id="GO:0046872">
    <property type="term" value="F:metal ion binding"/>
    <property type="evidence" value="ECO:0007669"/>
    <property type="project" value="UniProtKB-KW"/>
</dbReference>
<dbReference type="GO" id="GO:0009083">
    <property type="term" value="P:branched-chain amino acid catabolic process"/>
    <property type="evidence" value="ECO:0000250"/>
    <property type="project" value="UniProtKB"/>
</dbReference>
<dbReference type="CDD" id="cd02000">
    <property type="entry name" value="TPP_E1_PDC_ADC_BCADC"/>
    <property type="match status" value="1"/>
</dbReference>
<dbReference type="FunFam" id="3.40.50.970:FF:000015">
    <property type="entry name" value="2-oxoisovalerate dehydrogenase subunit alpha"/>
    <property type="match status" value="1"/>
</dbReference>
<dbReference type="Gene3D" id="3.40.50.970">
    <property type="match status" value="1"/>
</dbReference>
<dbReference type="InterPro" id="IPR050771">
    <property type="entry name" value="Alpha-ketoacid_DH_E1_comp"/>
</dbReference>
<dbReference type="InterPro" id="IPR001017">
    <property type="entry name" value="DH_E1"/>
</dbReference>
<dbReference type="InterPro" id="IPR029061">
    <property type="entry name" value="THDP-binding"/>
</dbReference>
<dbReference type="PANTHER" id="PTHR43380">
    <property type="entry name" value="2-OXOISOVALERATE DEHYDROGENASE SUBUNIT ALPHA, MITOCHONDRIAL"/>
    <property type="match status" value="1"/>
</dbReference>
<dbReference type="PANTHER" id="PTHR43380:SF1">
    <property type="entry name" value="2-OXOISOVALERATE DEHYDROGENASE SUBUNIT ALPHA, MITOCHONDRIAL"/>
    <property type="match status" value="1"/>
</dbReference>
<dbReference type="Pfam" id="PF00676">
    <property type="entry name" value="E1_dh"/>
    <property type="match status" value="1"/>
</dbReference>
<dbReference type="SUPFAM" id="SSF52518">
    <property type="entry name" value="Thiamin diphosphate-binding fold (THDP-binding)"/>
    <property type="match status" value="1"/>
</dbReference>